<proteinExistence type="evidence at protein level"/>
<sequence length="399" mass="44639">MGIIERIKEIEAEMARTQKNKATEYHLGQLKAKIAKLRTQLLEPPKGASGGGEGFEVTKYGHGRVALIGFPSVGKSTLLTMLTGTHSEAASYEFTTLTCIPGVIHYNDTKIQLLDLPGIIEGASEGKGRGRQVIAVAKSSDLVLMVLDASKSEGHRQILTKELEAVGLRLNKTPPQIYFKKKKTGGISFNTTAPLTHIDEKLCYQILHEYKIHNAEVLFRENATVDDFIDVIEGNRKYIKCVYVYNKIDVVGIDDVDRLSRQPNSIVISCNLKLNLDRLLARMWDEMGLVRVYSKPQGQQPDFDEPFVLSSDRGGCTVEDFCNHVHRTLVKDMKYALVWGTSTRHNPQNCGLSQHLEDEDVVQIVKKKERDEGGRGRFKSHSNAPARIADREKKAPLKQ</sequence>
<reference key="1">
    <citation type="journal article" date="1999" name="Plant Mol. Biol.">
        <title>Characterization of DRGs, developmentally regulated GTP-binding proteins, from pea and Arabidopsis.</title>
        <authorList>
            <person name="Devitt M.L."/>
            <person name="Maas K.J."/>
            <person name="Stafstrom J.P."/>
        </authorList>
    </citation>
    <scope>NUCLEOTIDE SEQUENCE [MRNA]</scope>
    <scope>TISSUE SPECIFICITY</scope>
    <source>
        <strain>cv. Columbia</strain>
    </source>
</reference>
<reference key="2">
    <citation type="journal article" date="1999" name="Plant Mol. Biol.">
        <title>Characterization of ATDRG1, a member of a new class of GTP-binding proteins in plants.</title>
        <authorList>
            <person name="Etheridge N."/>
            <person name="Trusov Y."/>
            <person name="Verbelen J.P."/>
            <person name="Botella J.R."/>
        </authorList>
    </citation>
    <scope>NUCLEOTIDE SEQUENCE [MRNA]</scope>
    <scope>TISSUE SPECIFICITY</scope>
    <scope>SUBCELLULAR LOCATION</scope>
    <source>
        <strain>cv. Columbia</strain>
    </source>
</reference>
<reference key="3">
    <citation type="journal article" date="2000" name="Nature">
        <title>Sequence and analysis of chromosome 1 of the plant Arabidopsis thaliana.</title>
        <authorList>
            <person name="Theologis A."/>
            <person name="Ecker J.R."/>
            <person name="Palm C.J."/>
            <person name="Federspiel N.A."/>
            <person name="Kaul S."/>
            <person name="White O."/>
            <person name="Alonso J."/>
            <person name="Altafi H."/>
            <person name="Araujo R."/>
            <person name="Bowman C.L."/>
            <person name="Brooks S.Y."/>
            <person name="Buehler E."/>
            <person name="Chan A."/>
            <person name="Chao Q."/>
            <person name="Chen H."/>
            <person name="Cheuk R.F."/>
            <person name="Chin C.W."/>
            <person name="Chung M.K."/>
            <person name="Conn L."/>
            <person name="Conway A.B."/>
            <person name="Conway A.R."/>
            <person name="Creasy T.H."/>
            <person name="Dewar K."/>
            <person name="Dunn P."/>
            <person name="Etgu P."/>
            <person name="Feldblyum T.V."/>
            <person name="Feng J.-D."/>
            <person name="Fong B."/>
            <person name="Fujii C.Y."/>
            <person name="Gill J.E."/>
            <person name="Goldsmith A.D."/>
            <person name="Haas B."/>
            <person name="Hansen N.F."/>
            <person name="Hughes B."/>
            <person name="Huizar L."/>
            <person name="Hunter J.L."/>
            <person name="Jenkins J."/>
            <person name="Johnson-Hopson C."/>
            <person name="Khan S."/>
            <person name="Khaykin E."/>
            <person name="Kim C.J."/>
            <person name="Koo H.L."/>
            <person name="Kremenetskaia I."/>
            <person name="Kurtz D.B."/>
            <person name="Kwan A."/>
            <person name="Lam B."/>
            <person name="Langin-Hooper S."/>
            <person name="Lee A."/>
            <person name="Lee J.M."/>
            <person name="Lenz C.A."/>
            <person name="Li J.H."/>
            <person name="Li Y.-P."/>
            <person name="Lin X."/>
            <person name="Liu S.X."/>
            <person name="Liu Z.A."/>
            <person name="Luros J.S."/>
            <person name="Maiti R."/>
            <person name="Marziali A."/>
            <person name="Militscher J."/>
            <person name="Miranda M."/>
            <person name="Nguyen M."/>
            <person name="Nierman W.C."/>
            <person name="Osborne B.I."/>
            <person name="Pai G."/>
            <person name="Peterson J."/>
            <person name="Pham P.K."/>
            <person name="Rizzo M."/>
            <person name="Rooney T."/>
            <person name="Rowley D."/>
            <person name="Sakano H."/>
            <person name="Salzberg S.L."/>
            <person name="Schwartz J.R."/>
            <person name="Shinn P."/>
            <person name="Southwick A.M."/>
            <person name="Sun H."/>
            <person name="Tallon L.J."/>
            <person name="Tambunga G."/>
            <person name="Toriumi M.J."/>
            <person name="Town C.D."/>
            <person name="Utterback T."/>
            <person name="Van Aken S."/>
            <person name="Vaysberg M."/>
            <person name="Vysotskaia V.S."/>
            <person name="Walker M."/>
            <person name="Wu D."/>
            <person name="Yu G."/>
            <person name="Fraser C.M."/>
            <person name="Venter J.C."/>
            <person name="Davis R.W."/>
        </authorList>
    </citation>
    <scope>NUCLEOTIDE SEQUENCE [LARGE SCALE GENOMIC DNA]</scope>
    <source>
        <strain>cv. Columbia</strain>
    </source>
</reference>
<reference key="4">
    <citation type="journal article" date="2017" name="Plant J.">
        <title>Araport11: a complete reannotation of the Arabidopsis thaliana reference genome.</title>
        <authorList>
            <person name="Cheng C.Y."/>
            <person name="Krishnakumar V."/>
            <person name="Chan A.P."/>
            <person name="Thibaud-Nissen F."/>
            <person name="Schobel S."/>
            <person name="Town C.D."/>
        </authorList>
    </citation>
    <scope>GENOME REANNOTATION</scope>
    <source>
        <strain>cv. Columbia</strain>
    </source>
</reference>
<reference key="5">
    <citation type="journal article" date="2003" name="Science">
        <title>Empirical analysis of transcriptional activity in the Arabidopsis genome.</title>
        <authorList>
            <person name="Yamada K."/>
            <person name="Lim J."/>
            <person name="Dale J.M."/>
            <person name="Chen H."/>
            <person name="Shinn P."/>
            <person name="Palm C.J."/>
            <person name="Southwick A.M."/>
            <person name="Wu H.C."/>
            <person name="Kim C.J."/>
            <person name="Nguyen M."/>
            <person name="Pham P.K."/>
            <person name="Cheuk R.F."/>
            <person name="Karlin-Newmann G."/>
            <person name="Liu S.X."/>
            <person name="Lam B."/>
            <person name="Sakano H."/>
            <person name="Wu T."/>
            <person name="Yu G."/>
            <person name="Miranda M."/>
            <person name="Quach H.L."/>
            <person name="Tripp M."/>
            <person name="Chang C.H."/>
            <person name="Lee J.M."/>
            <person name="Toriumi M.J."/>
            <person name="Chan M.M."/>
            <person name="Tang C.C."/>
            <person name="Onodera C.S."/>
            <person name="Deng J.M."/>
            <person name="Akiyama K."/>
            <person name="Ansari Y."/>
            <person name="Arakawa T."/>
            <person name="Banh J."/>
            <person name="Banno F."/>
            <person name="Bowser L."/>
            <person name="Brooks S.Y."/>
            <person name="Carninci P."/>
            <person name="Chao Q."/>
            <person name="Choy N."/>
            <person name="Enju A."/>
            <person name="Goldsmith A.D."/>
            <person name="Gurjal M."/>
            <person name="Hansen N.F."/>
            <person name="Hayashizaki Y."/>
            <person name="Johnson-Hopson C."/>
            <person name="Hsuan V.W."/>
            <person name="Iida K."/>
            <person name="Karnes M."/>
            <person name="Khan S."/>
            <person name="Koesema E."/>
            <person name="Ishida J."/>
            <person name="Jiang P.X."/>
            <person name="Jones T."/>
            <person name="Kawai J."/>
            <person name="Kamiya A."/>
            <person name="Meyers C."/>
            <person name="Nakajima M."/>
            <person name="Narusaka M."/>
            <person name="Seki M."/>
            <person name="Sakurai T."/>
            <person name="Satou M."/>
            <person name="Tamse R."/>
            <person name="Vaysberg M."/>
            <person name="Wallender E.K."/>
            <person name="Wong C."/>
            <person name="Yamamura Y."/>
            <person name="Yuan S."/>
            <person name="Shinozaki K."/>
            <person name="Davis R.W."/>
            <person name="Theologis A."/>
            <person name="Ecker J.R."/>
        </authorList>
    </citation>
    <scope>NUCLEOTIDE SEQUENCE [LARGE SCALE MRNA]</scope>
    <source>
        <strain>cv. Columbia</strain>
    </source>
</reference>
<reference key="6">
    <citation type="submission" date="2005-02" db="EMBL/GenBank/DDBJ databases">
        <title>Arabidopsis ORF clones.</title>
        <authorList>
            <person name="Kim C.J."/>
            <person name="Chen H."/>
            <person name="Cheuk R.F."/>
            <person name="Shinn P."/>
            <person name="Ecker J.R."/>
        </authorList>
    </citation>
    <scope>NUCLEOTIDE SEQUENCE [LARGE SCALE MRNA]</scope>
    <source>
        <strain>cv. Columbia</strain>
    </source>
</reference>
<reference key="7">
    <citation type="journal article" date="2004" name="Plant J.">
        <title>Isolation and identification of phosphatidic acid targets from plants.</title>
        <authorList>
            <person name="Testerink C."/>
            <person name="Dekker H.L."/>
            <person name="Lim Z.-Y."/>
            <person name="Johns M.K."/>
            <person name="Holmes A.B."/>
            <person name="De Koster C.G."/>
            <person name="Ktistakis N.T."/>
            <person name="Munnik T."/>
        </authorList>
    </citation>
    <scope>INTERACTION WITH PHOSPHATIDIC ACID</scope>
    <scope>IDENTIFICATION BY MASS SPECTROMETRY</scope>
    <source>
        <strain>cv. Columbia</strain>
    </source>
</reference>
<reference key="8">
    <citation type="journal article" date="2009" name="Protein Expr. Purif.">
        <title>Biochemical characterization of Arabidopsis developmentally regulated G-proteins (DRGs).</title>
        <authorList>
            <person name="O'Connell A."/>
            <person name="Robin G."/>
            <person name="Kobe B."/>
            <person name="Botella J.R."/>
        </authorList>
    </citation>
    <scope>FUNCTION</scope>
</reference>
<accession>Q9LQK0</accession>
<accession>O04174</accession>
<accession>Q94K69</accession>
<accession>Q9LNQ8</accession>
<name>DRG1_ARATH</name>
<feature type="chain" id="PRO_0000412608" description="Developmentally-regulated G-protein 1">
    <location>
        <begin position="1"/>
        <end position="399"/>
    </location>
</feature>
<feature type="domain" description="OBG-type G" evidence="1">
    <location>
        <begin position="63"/>
        <end position="288"/>
    </location>
</feature>
<feature type="domain" description="TGS" evidence="2">
    <location>
        <begin position="288"/>
        <end position="366"/>
    </location>
</feature>
<feature type="region of interest" description="Disordered" evidence="3">
    <location>
        <begin position="367"/>
        <end position="399"/>
    </location>
</feature>
<feature type="compositionally biased region" description="Basic and acidic residues" evidence="3">
    <location>
        <begin position="388"/>
        <end position="399"/>
    </location>
</feature>
<feature type="binding site" evidence="1">
    <location>
        <begin position="69"/>
        <end position="76"/>
    </location>
    <ligand>
        <name>GTP</name>
        <dbReference type="ChEBI" id="CHEBI:37565"/>
    </ligand>
</feature>
<feature type="binding site" evidence="1">
    <location>
        <begin position="115"/>
        <end position="119"/>
    </location>
    <ligand>
        <name>GTP</name>
        <dbReference type="ChEBI" id="CHEBI:37565"/>
    </ligand>
</feature>
<feature type="binding site" evidence="1">
    <location>
        <begin position="246"/>
        <end position="249"/>
    </location>
    <ligand>
        <name>GTP</name>
        <dbReference type="ChEBI" id="CHEBI:37565"/>
    </ligand>
</feature>
<feature type="sequence conflict" description="In Ref. 5; AAK44073." evidence="7" ref="5">
    <original>Y</original>
    <variation>C</variation>
    <location>
        <position position="92"/>
    </location>
</feature>
<feature type="sequence conflict" description="In Ref. 1; AAB67830 and 2; AAB53256." evidence="7" ref="1 2">
    <original>N</original>
    <variation>I</variation>
    <location>
        <position position="246"/>
    </location>
</feature>
<evidence type="ECO:0000255" key="1">
    <source>
        <dbReference type="PROSITE-ProRule" id="PRU01047"/>
    </source>
</evidence>
<evidence type="ECO:0000255" key="2">
    <source>
        <dbReference type="PROSITE-ProRule" id="PRU01228"/>
    </source>
</evidence>
<evidence type="ECO:0000256" key="3">
    <source>
        <dbReference type="SAM" id="MobiDB-lite"/>
    </source>
</evidence>
<evidence type="ECO:0000269" key="4">
    <source>
    </source>
</evidence>
<evidence type="ECO:0000269" key="5">
    <source>
    </source>
</evidence>
<evidence type="ECO:0000269" key="6">
    <source>
    </source>
</evidence>
<evidence type="ECO:0000305" key="7"/>
<dbReference type="EMBL" id="AF014822">
    <property type="protein sequence ID" value="AAB67830.1"/>
    <property type="molecule type" value="mRNA"/>
</dbReference>
<dbReference type="EMBL" id="U66408">
    <property type="protein sequence ID" value="AAB53256.1"/>
    <property type="molecule type" value="mRNA"/>
</dbReference>
<dbReference type="EMBL" id="AC007843">
    <property type="protein sequence ID" value="AAF97313.1"/>
    <property type="molecule type" value="Genomic_DNA"/>
</dbReference>
<dbReference type="EMBL" id="AC022492">
    <property type="protein sequence ID" value="AAF79465.1"/>
    <property type="status" value="ALT_SEQ"/>
    <property type="molecule type" value="Genomic_DNA"/>
</dbReference>
<dbReference type="EMBL" id="CP002684">
    <property type="protein sequence ID" value="AEE29595.1"/>
    <property type="molecule type" value="Genomic_DNA"/>
</dbReference>
<dbReference type="EMBL" id="CP002684">
    <property type="protein sequence ID" value="AEE29596.1"/>
    <property type="molecule type" value="Genomic_DNA"/>
</dbReference>
<dbReference type="EMBL" id="AF370258">
    <property type="protein sequence ID" value="AAK44073.1"/>
    <property type="molecule type" value="mRNA"/>
</dbReference>
<dbReference type="EMBL" id="BT021092">
    <property type="protein sequence ID" value="AAX12862.1"/>
    <property type="molecule type" value="mRNA"/>
</dbReference>
<dbReference type="RefSeq" id="NP_001077555.1">
    <property type="nucleotide sequence ID" value="NM_001084086.1"/>
</dbReference>
<dbReference type="RefSeq" id="NP_173190.1">
    <property type="nucleotide sequence ID" value="NM_101609.4"/>
</dbReference>
<dbReference type="SMR" id="Q9LQK0"/>
<dbReference type="BioGRID" id="23560">
    <property type="interactions" value="1"/>
</dbReference>
<dbReference type="FunCoup" id="Q9LQK0">
    <property type="interactions" value="5050"/>
</dbReference>
<dbReference type="STRING" id="3702.Q9LQK0"/>
<dbReference type="PaxDb" id="3702-AT1G17470.1"/>
<dbReference type="ProteomicsDB" id="224301"/>
<dbReference type="DNASU" id="838320"/>
<dbReference type="EnsemblPlants" id="AT1G17470.1">
    <property type="protein sequence ID" value="AT1G17470.1"/>
    <property type="gene ID" value="AT1G17470"/>
</dbReference>
<dbReference type="EnsemblPlants" id="AT1G17470.2">
    <property type="protein sequence ID" value="AT1G17470.2"/>
    <property type="gene ID" value="AT1G17470"/>
</dbReference>
<dbReference type="GeneID" id="838320"/>
<dbReference type="Gramene" id="AT1G17470.1">
    <property type="protein sequence ID" value="AT1G17470.1"/>
    <property type="gene ID" value="AT1G17470"/>
</dbReference>
<dbReference type="Gramene" id="AT1G17470.2">
    <property type="protein sequence ID" value="AT1G17470.2"/>
    <property type="gene ID" value="AT1G17470"/>
</dbReference>
<dbReference type="KEGG" id="ath:AT1G17470"/>
<dbReference type="Araport" id="AT1G17470"/>
<dbReference type="TAIR" id="AT1G17470">
    <property type="gene designation" value="DRG1"/>
</dbReference>
<dbReference type="eggNOG" id="KOG1486">
    <property type="taxonomic scope" value="Eukaryota"/>
</dbReference>
<dbReference type="HOGENOM" id="CLU_044997_0_0_1"/>
<dbReference type="InParanoid" id="Q9LQK0"/>
<dbReference type="OMA" id="WGTSTRH"/>
<dbReference type="OrthoDB" id="603at2759"/>
<dbReference type="PhylomeDB" id="Q9LQK0"/>
<dbReference type="PRO" id="PR:Q9LQK0"/>
<dbReference type="Proteomes" id="UP000006548">
    <property type="component" value="Chromosome 1"/>
</dbReference>
<dbReference type="ExpressionAtlas" id="Q9LQK0">
    <property type="expression patterns" value="baseline and differential"/>
</dbReference>
<dbReference type="GO" id="GO:0031410">
    <property type="term" value="C:cytoplasmic vesicle"/>
    <property type="evidence" value="ECO:0000314"/>
    <property type="project" value="TAIR"/>
</dbReference>
<dbReference type="GO" id="GO:0005634">
    <property type="term" value="C:nucleus"/>
    <property type="evidence" value="ECO:0007005"/>
    <property type="project" value="TAIR"/>
</dbReference>
<dbReference type="GO" id="GO:0019003">
    <property type="term" value="F:GDP binding"/>
    <property type="evidence" value="ECO:0000314"/>
    <property type="project" value="TAIR"/>
</dbReference>
<dbReference type="GO" id="GO:0005525">
    <property type="term" value="F:GTP binding"/>
    <property type="evidence" value="ECO:0000314"/>
    <property type="project" value="TAIR"/>
</dbReference>
<dbReference type="GO" id="GO:0003924">
    <property type="term" value="F:GTPase activity"/>
    <property type="evidence" value="ECO:0000314"/>
    <property type="project" value="TAIR"/>
</dbReference>
<dbReference type="GO" id="GO:0003729">
    <property type="term" value="F:mRNA binding"/>
    <property type="evidence" value="ECO:0000314"/>
    <property type="project" value="TAIR"/>
</dbReference>
<dbReference type="GO" id="GO:0070300">
    <property type="term" value="F:phosphatidic acid binding"/>
    <property type="evidence" value="ECO:0000314"/>
    <property type="project" value="UniProtKB"/>
</dbReference>
<dbReference type="CDD" id="cd01896">
    <property type="entry name" value="DRG"/>
    <property type="match status" value="1"/>
</dbReference>
<dbReference type="CDD" id="cd17230">
    <property type="entry name" value="TGS_DRG1"/>
    <property type="match status" value="1"/>
</dbReference>
<dbReference type="FunFam" id="3.10.20.30:FF:000003">
    <property type="entry name" value="Developmentally-regulated GTP-binding protein 1"/>
    <property type="match status" value="1"/>
</dbReference>
<dbReference type="FunFam" id="3.40.50.300:FF:000740">
    <property type="entry name" value="Putative GTP-binding protein 1"/>
    <property type="match status" value="1"/>
</dbReference>
<dbReference type="Gene3D" id="3.10.20.30">
    <property type="match status" value="1"/>
</dbReference>
<dbReference type="Gene3D" id="6.10.140.1070">
    <property type="match status" value="2"/>
</dbReference>
<dbReference type="InterPro" id="IPR012675">
    <property type="entry name" value="Beta-grasp_dom_sf"/>
</dbReference>
<dbReference type="InterPro" id="IPR045001">
    <property type="entry name" value="DRG"/>
</dbReference>
<dbReference type="InterPro" id="IPR031167">
    <property type="entry name" value="G_OBG"/>
</dbReference>
<dbReference type="InterPro" id="IPR006073">
    <property type="entry name" value="GTP-bd"/>
</dbReference>
<dbReference type="InterPro" id="IPR031662">
    <property type="entry name" value="GTP-binding_2"/>
</dbReference>
<dbReference type="InterPro" id="IPR006074">
    <property type="entry name" value="GTP1-OBG_CS"/>
</dbReference>
<dbReference type="InterPro" id="IPR027417">
    <property type="entry name" value="P-loop_NTPase"/>
</dbReference>
<dbReference type="InterPro" id="IPR005225">
    <property type="entry name" value="Small_GTP-bd"/>
</dbReference>
<dbReference type="InterPro" id="IPR004095">
    <property type="entry name" value="TGS"/>
</dbReference>
<dbReference type="InterPro" id="IPR012676">
    <property type="entry name" value="TGS-like"/>
</dbReference>
<dbReference type="NCBIfam" id="TIGR00231">
    <property type="entry name" value="small_GTP"/>
    <property type="match status" value="1"/>
</dbReference>
<dbReference type="PANTHER" id="PTHR43127">
    <property type="entry name" value="DEVELOPMENTALLY-REGULATED GTP-BINDING PROTEIN 2"/>
    <property type="match status" value="1"/>
</dbReference>
<dbReference type="Pfam" id="PF01926">
    <property type="entry name" value="MMR_HSR1"/>
    <property type="match status" value="1"/>
</dbReference>
<dbReference type="Pfam" id="PF16897">
    <property type="entry name" value="MMR_HSR1_Xtn"/>
    <property type="match status" value="1"/>
</dbReference>
<dbReference type="Pfam" id="PF02824">
    <property type="entry name" value="TGS"/>
    <property type="match status" value="1"/>
</dbReference>
<dbReference type="PRINTS" id="PR00326">
    <property type="entry name" value="GTP1OBG"/>
</dbReference>
<dbReference type="SUPFAM" id="SSF52540">
    <property type="entry name" value="P-loop containing nucleoside triphosphate hydrolases"/>
    <property type="match status" value="1"/>
</dbReference>
<dbReference type="SUPFAM" id="SSF81271">
    <property type="entry name" value="TGS-like"/>
    <property type="match status" value="1"/>
</dbReference>
<dbReference type="PROSITE" id="PS51710">
    <property type="entry name" value="G_OBG"/>
    <property type="match status" value="1"/>
</dbReference>
<dbReference type="PROSITE" id="PS00905">
    <property type="entry name" value="GTP1_OBG"/>
    <property type="match status" value="1"/>
</dbReference>
<dbReference type="PROSITE" id="PS51880">
    <property type="entry name" value="TGS"/>
    <property type="match status" value="1"/>
</dbReference>
<comment type="function">
    <text evidence="6">Binds GDP and GTP, and has low GTPase activity. May interact with phosphatidic acid (PA).</text>
</comment>
<comment type="subcellular location">
    <subcellularLocation>
        <location evidence="5">Cytoplasmic vesicle</location>
    </subcellularLocation>
    <subcellularLocation>
        <location evidence="5">Cytoplasm</location>
    </subcellularLocation>
</comment>
<comment type="tissue specificity">
    <text evidence="4 5">Expressed in actively growing tissues and reproductive organs. Mostly expressed in leaves, stems and siliques. Also present in flowers and flower buds, and, to a lower extent, in roots.</text>
</comment>
<comment type="similarity">
    <text evidence="1">Belongs to the TRAFAC class OBG-HflX-like GTPase superfamily. OBG GTPase family.</text>
</comment>
<comment type="caution">
    <text evidence="7">The nomenclature of the 3 Arabidopsis DRG genes is ambiguous; in the literature several gene names have been used for the same protein.</text>
</comment>
<comment type="sequence caution" evidence="7">
    <conflict type="erroneous gene model prediction">
        <sequence resource="EMBL-CDS" id="AAF79465"/>
    </conflict>
</comment>
<keyword id="KW-0963">Cytoplasm</keyword>
<keyword id="KW-0968">Cytoplasmic vesicle</keyword>
<keyword id="KW-0342">GTP-binding</keyword>
<keyword id="KW-0446">Lipid-binding</keyword>
<keyword id="KW-0547">Nucleotide-binding</keyword>
<keyword id="KW-1185">Reference proteome</keyword>
<organism>
    <name type="scientific">Arabidopsis thaliana</name>
    <name type="common">Mouse-ear cress</name>
    <dbReference type="NCBI Taxonomy" id="3702"/>
    <lineage>
        <taxon>Eukaryota</taxon>
        <taxon>Viridiplantae</taxon>
        <taxon>Streptophyta</taxon>
        <taxon>Embryophyta</taxon>
        <taxon>Tracheophyta</taxon>
        <taxon>Spermatophyta</taxon>
        <taxon>Magnoliopsida</taxon>
        <taxon>eudicotyledons</taxon>
        <taxon>Gunneridae</taxon>
        <taxon>Pentapetalae</taxon>
        <taxon>rosids</taxon>
        <taxon>malvids</taxon>
        <taxon>Brassicales</taxon>
        <taxon>Brassicaceae</taxon>
        <taxon>Camelineae</taxon>
        <taxon>Arabidopsis</taxon>
    </lineage>
</organism>
<protein>
    <recommendedName>
        <fullName>Developmentally-regulated G-protein 1</fullName>
        <shortName>AtDRG1</shortName>
    </recommendedName>
    <alternativeName>
        <fullName>Developmentally-regulated G-protein 2A</fullName>
        <shortName>AtDRG2a</shortName>
    </alternativeName>
</protein>
<gene>
    <name type="primary">DRG1</name>
    <name type="synonym">DRG2A</name>
    <name type="ordered locus">At1g17470</name>
    <name type="ORF">F1L3.17</name>
    <name type="ORF">F28G4.4</name>
</gene>